<evidence type="ECO:0000255" key="1">
    <source>
        <dbReference type="HAMAP-Rule" id="MF_03111"/>
    </source>
</evidence>
<evidence type="ECO:0000305" key="2"/>
<name>COQ4_COCIM</name>
<keyword id="KW-0456">Lyase</keyword>
<keyword id="KW-0472">Membrane</keyword>
<keyword id="KW-0479">Metal-binding</keyword>
<keyword id="KW-0496">Mitochondrion</keyword>
<keyword id="KW-0999">Mitochondrion inner membrane</keyword>
<keyword id="KW-1185">Reference proteome</keyword>
<keyword id="KW-0809">Transit peptide</keyword>
<keyword id="KW-0831">Ubiquinone biosynthesis</keyword>
<keyword id="KW-0862">Zinc</keyword>
<organism>
    <name type="scientific">Coccidioides immitis (strain RS)</name>
    <name type="common">Valley fever fungus</name>
    <dbReference type="NCBI Taxonomy" id="246410"/>
    <lineage>
        <taxon>Eukaryota</taxon>
        <taxon>Fungi</taxon>
        <taxon>Dikarya</taxon>
        <taxon>Ascomycota</taxon>
        <taxon>Pezizomycotina</taxon>
        <taxon>Eurotiomycetes</taxon>
        <taxon>Eurotiomycetidae</taxon>
        <taxon>Onygenales</taxon>
        <taxon>Onygenaceae</taxon>
        <taxon>Coccidioides</taxon>
    </lineage>
</organism>
<reference key="1">
    <citation type="journal article" date="2009" name="Genome Res.">
        <title>Comparative genomic analyses of the human fungal pathogens Coccidioides and their relatives.</title>
        <authorList>
            <person name="Sharpton T.J."/>
            <person name="Stajich J.E."/>
            <person name="Rounsley S.D."/>
            <person name="Gardner M.J."/>
            <person name="Wortman J.R."/>
            <person name="Jordar V.S."/>
            <person name="Maiti R."/>
            <person name="Kodira C.D."/>
            <person name="Neafsey D.E."/>
            <person name="Zeng Q."/>
            <person name="Hung C.-Y."/>
            <person name="McMahan C."/>
            <person name="Muszewska A."/>
            <person name="Grynberg M."/>
            <person name="Mandel M.A."/>
            <person name="Kellner E.M."/>
            <person name="Barker B.M."/>
            <person name="Galgiani J.N."/>
            <person name="Orbach M.J."/>
            <person name="Kirkland T.N."/>
            <person name="Cole G.T."/>
            <person name="Henn M.R."/>
            <person name="Birren B.W."/>
            <person name="Taylor J.W."/>
        </authorList>
    </citation>
    <scope>NUCLEOTIDE SEQUENCE [LARGE SCALE GENOMIC DNA]</scope>
    <source>
        <strain>RS</strain>
    </source>
</reference>
<reference key="2">
    <citation type="journal article" date="2010" name="Genome Res.">
        <title>Population genomic sequencing of Coccidioides fungi reveals recent hybridization and transposon control.</title>
        <authorList>
            <person name="Neafsey D.E."/>
            <person name="Barker B.M."/>
            <person name="Sharpton T.J."/>
            <person name="Stajich J.E."/>
            <person name="Park D.J."/>
            <person name="Whiston E."/>
            <person name="Hung C.-Y."/>
            <person name="McMahan C."/>
            <person name="White J."/>
            <person name="Sykes S."/>
            <person name="Heiman D."/>
            <person name="Young S."/>
            <person name="Zeng Q."/>
            <person name="Abouelleil A."/>
            <person name="Aftuck L."/>
            <person name="Bessette D."/>
            <person name="Brown A."/>
            <person name="FitzGerald M."/>
            <person name="Lui A."/>
            <person name="Macdonald J.P."/>
            <person name="Priest M."/>
            <person name="Orbach M.J."/>
            <person name="Galgiani J.N."/>
            <person name="Kirkland T.N."/>
            <person name="Cole G.T."/>
            <person name="Birren B.W."/>
            <person name="Henn M.R."/>
            <person name="Taylor J.W."/>
            <person name="Rounsley S.D."/>
        </authorList>
    </citation>
    <scope>GENOME REANNOTATION</scope>
    <source>
        <strain>RS</strain>
    </source>
</reference>
<proteinExistence type="inferred from homology"/>
<comment type="function">
    <text evidence="1">Lyase that catalyzes the C1-decarboxylation of 4-hydroxy-3-methoxy-5-(all-trans-polyprenyl)benzoic acid into 2-methoxy-6-(all-trans-polyprenyl)phenol during ubiquinone biosynthesis.</text>
</comment>
<comment type="catalytic activity">
    <reaction evidence="1">
        <text>a 4-hydroxy-3-methoxy-5-(all-trans-polyprenyl)benzoate + H(+) = a 2-methoxy-6-(all-trans-polyprenyl)phenol + CO2</text>
        <dbReference type="Rhea" id="RHEA:81179"/>
        <dbReference type="Rhea" id="RHEA-COMP:9551"/>
        <dbReference type="Rhea" id="RHEA-COMP:10931"/>
        <dbReference type="ChEBI" id="CHEBI:15378"/>
        <dbReference type="ChEBI" id="CHEBI:16526"/>
        <dbReference type="ChEBI" id="CHEBI:62731"/>
        <dbReference type="ChEBI" id="CHEBI:84443"/>
        <dbReference type="EC" id="4.1.1.130"/>
    </reaction>
</comment>
<comment type="cofactor">
    <cofactor evidence="1">
        <name>Zn(2+)</name>
        <dbReference type="ChEBI" id="CHEBI:29105"/>
    </cofactor>
</comment>
<comment type="pathway">
    <text evidence="1">Cofactor biosynthesis; ubiquinone biosynthesis.</text>
</comment>
<comment type="subunit">
    <text evidence="1">Component of a multi-subunit COQ enzyme complex, composed of at least COQ3, COQ4, COQ5, COQ6, COQ7 and COQ9.</text>
</comment>
<comment type="subcellular location">
    <subcellularLocation>
        <location evidence="1">Mitochondrion inner membrane</location>
        <topology evidence="1">Peripheral membrane protein</topology>
        <orientation evidence="1">Matrix side</orientation>
    </subcellularLocation>
</comment>
<comment type="similarity">
    <text evidence="1">Belongs to the COQ4 family.</text>
</comment>
<comment type="sequence caution" evidence="2">
    <conflict type="erroneous initiation">
        <sequence resource="EMBL-CDS" id="EAS35080"/>
    </conflict>
    <text>Extended N-terminus.</text>
</comment>
<feature type="transit peptide" description="Mitochondrion" evidence="1">
    <location>
        <begin position="1"/>
        <end position="25"/>
    </location>
</feature>
<feature type="chain" id="PRO_0000388109" description="Ubiquinone biosynthesis protein COQ4, mitochondrial">
    <location>
        <begin position="26"/>
        <end position="283"/>
    </location>
</feature>
<feature type="binding site" evidence="1">
    <location>
        <position position="166"/>
    </location>
    <ligand>
        <name>Zn(2+)</name>
        <dbReference type="ChEBI" id="CHEBI:29105"/>
    </ligand>
</feature>
<feature type="binding site" evidence="1">
    <location>
        <position position="167"/>
    </location>
    <ligand>
        <name>Zn(2+)</name>
        <dbReference type="ChEBI" id="CHEBI:29105"/>
    </ligand>
</feature>
<feature type="binding site" evidence="1">
    <location>
        <position position="170"/>
    </location>
    <ligand>
        <name>Zn(2+)</name>
        <dbReference type="ChEBI" id="CHEBI:29105"/>
    </ligand>
</feature>
<feature type="binding site" evidence="1">
    <location>
        <position position="182"/>
    </location>
    <ligand>
        <name>Zn(2+)</name>
        <dbReference type="ChEBI" id="CHEBI:29105"/>
    </ligand>
</feature>
<dbReference type="EC" id="4.1.1.130" evidence="1"/>
<dbReference type="EMBL" id="GG704911">
    <property type="protein sequence ID" value="EAS35080.2"/>
    <property type="status" value="ALT_INIT"/>
    <property type="molecule type" value="Genomic_DNA"/>
</dbReference>
<dbReference type="RefSeq" id="XP_001246663.2">
    <property type="nucleotide sequence ID" value="XM_001246662.2"/>
</dbReference>
<dbReference type="SMR" id="Q1EAH9"/>
<dbReference type="FunCoup" id="Q1EAH9">
    <property type="interactions" value="498"/>
</dbReference>
<dbReference type="STRING" id="246410.Q1EAH9"/>
<dbReference type="GeneID" id="4565734"/>
<dbReference type="KEGG" id="cim:CIMG_00434"/>
<dbReference type="InParanoid" id="Q1EAH9"/>
<dbReference type="OrthoDB" id="4249at2759"/>
<dbReference type="UniPathway" id="UPA00232"/>
<dbReference type="Proteomes" id="UP000001261">
    <property type="component" value="Unassembled WGS sequence"/>
</dbReference>
<dbReference type="GO" id="GO:0031314">
    <property type="term" value="C:extrinsic component of mitochondrial inner membrane"/>
    <property type="evidence" value="ECO:0007669"/>
    <property type="project" value="UniProtKB-UniRule"/>
</dbReference>
<dbReference type="GO" id="GO:0006744">
    <property type="term" value="P:ubiquinone biosynthetic process"/>
    <property type="evidence" value="ECO:0007669"/>
    <property type="project" value="UniProtKB-UniRule"/>
</dbReference>
<dbReference type="HAMAP" id="MF_03111">
    <property type="entry name" value="Coq4"/>
    <property type="match status" value="1"/>
</dbReference>
<dbReference type="InterPro" id="IPR007715">
    <property type="entry name" value="Coq4"/>
</dbReference>
<dbReference type="InterPro" id="IPR027540">
    <property type="entry name" value="Coq4_euk"/>
</dbReference>
<dbReference type="PANTHER" id="PTHR12922">
    <property type="entry name" value="UBIQUINONE BIOSYNTHESIS PROTEIN"/>
    <property type="match status" value="1"/>
</dbReference>
<dbReference type="PANTHER" id="PTHR12922:SF7">
    <property type="entry name" value="UBIQUINONE BIOSYNTHESIS PROTEIN COQ4 HOMOLOG, MITOCHONDRIAL"/>
    <property type="match status" value="1"/>
</dbReference>
<dbReference type="Pfam" id="PF05019">
    <property type="entry name" value="Coq4"/>
    <property type="match status" value="1"/>
</dbReference>
<accession>Q1EAH9</accession>
<accession>A0A0D6K9P8</accession>
<accession>J3KH11</accession>
<protein>
    <recommendedName>
        <fullName evidence="1">Ubiquinone biosynthesis protein COQ4, mitochondrial</fullName>
    </recommendedName>
    <alternativeName>
        <fullName>4-hydroxy-3-methoxy-5-polyprenylbenzoate decarboxylase</fullName>
        <ecNumber evidence="1">4.1.1.130</ecNumber>
    </alternativeName>
    <alternativeName>
        <fullName evidence="1">Coenzyme Q biosynthesis protein 4</fullName>
    </alternativeName>
</protein>
<gene>
    <name evidence="1" type="primary">COQ4</name>
    <name type="ORF">CIMG_00434</name>
</gene>
<sequence length="283" mass="32233">MAIAKSVRARAVGLRSLRVLCAQRSVAREFSVLNRPQPNYPGHIPLTPIERGALAIGSAVGSLLNPRRGDLIATVGETTATPFFIYRLRDAMLADPTGRRILRDRPRITSQTLSLPYLRSLPKNTVGYTYATWLDREGVSPDTRSSVQYIDDEECAYVMQRYRECHDFYHAVTGLPIVVEGEIALKAFEFMNTLIPMTGLSVFAAIRLKPEEKQRFWSIHLPWAIRSGLASKELINVYWEEQLERDVNELREELNIEKPPDLRDIRKKVREQKKAAKEAVIKS</sequence>